<reference key="1">
    <citation type="journal article" date="2016" name="Stand. Genomic Sci.">
        <title>Complete genome sequence of Methanospirillum hungatei type strain JF1.</title>
        <authorList>
            <person name="Gunsalus R.P."/>
            <person name="Cook L.E."/>
            <person name="Crable B."/>
            <person name="Rohlin L."/>
            <person name="McDonald E."/>
            <person name="Mouttaki H."/>
            <person name="Sieber J.R."/>
            <person name="Poweleit N."/>
            <person name="Zhou H."/>
            <person name="Lapidus A.L."/>
            <person name="Daligault H.E."/>
            <person name="Land M."/>
            <person name="Gilna P."/>
            <person name="Ivanova N."/>
            <person name="Kyrpides N."/>
            <person name="Culley D.E."/>
            <person name="McInerney M.J."/>
        </authorList>
    </citation>
    <scope>NUCLEOTIDE SEQUENCE [LARGE SCALE GENOMIC DNA]</scope>
    <source>
        <strain>ATCC 27890 / DSM 864 / NBRC 100397 / JF-1</strain>
    </source>
</reference>
<accession>Q2FQE3</accession>
<evidence type="ECO:0000255" key="1">
    <source>
        <dbReference type="HAMAP-Rule" id="MF_00311"/>
    </source>
</evidence>
<protein>
    <recommendedName>
        <fullName evidence="1">A-type ATP synthase subunit E 3</fullName>
    </recommendedName>
</protein>
<proteinExistence type="inferred from homology"/>
<dbReference type="EMBL" id="CP000254">
    <property type="protein sequence ID" value="ABD41494.1"/>
    <property type="molecule type" value="Genomic_DNA"/>
</dbReference>
<dbReference type="RefSeq" id="WP_011448758.1">
    <property type="nucleotide sequence ID" value="NC_007796.1"/>
</dbReference>
<dbReference type="SMR" id="Q2FQE3"/>
<dbReference type="FunCoup" id="Q2FQE3">
    <property type="interactions" value="13"/>
</dbReference>
<dbReference type="STRING" id="323259.Mhun_1773"/>
<dbReference type="EnsemblBacteria" id="ABD41494">
    <property type="protein sequence ID" value="ABD41494"/>
    <property type="gene ID" value="Mhun_1773"/>
</dbReference>
<dbReference type="GeneID" id="3924747"/>
<dbReference type="KEGG" id="mhu:Mhun_1773"/>
<dbReference type="eggNOG" id="arCOG00869">
    <property type="taxonomic scope" value="Archaea"/>
</dbReference>
<dbReference type="HOGENOM" id="CLU_1399759_0_0_2"/>
<dbReference type="InParanoid" id="Q2FQE3"/>
<dbReference type="OrthoDB" id="4691at2157"/>
<dbReference type="Proteomes" id="UP000001941">
    <property type="component" value="Chromosome"/>
</dbReference>
<dbReference type="GO" id="GO:0005886">
    <property type="term" value="C:plasma membrane"/>
    <property type="evidence" value="ECO:0007669"/>
    <property type="project" value="UniProtKB-SubCell"/>
</dbReference>
<dbReference type="GO" id="GO:0033178">
    <property type="term" value="C:proton-transporting two-sector ATPase complex, catalytic domain"/>
    <property type="evidence" value="ECO:0007669"/>
    <property type="project" value="InterPro"/>
</dbReference>
<dbReference type="GO" id="GO:0005524">
    <property type="term" value="F:ATP binding"/>
    <property type="evidence" value="ECO:0007669"/>
    <property type="project" value="UniProtKB-UniRule"/>
</dbReference>
<dbReference type="GO" id="GO:0046933">
    <property type="term" value="F:proton-transporting ATP synthase activity, rotational mechanism"/>
    <property type="evidence" value="ECO:0007669"/>
    <property type="project" value="UniProtKB-UniRule"/>
</dbReference>
<dbReference type="GO" id="GO:0046961">
    <property type="term" value="F:proton-transporting ATPase activity, rotational mechanism"/>
    <property type="evidence" value="ECO:0007669"/>
    <property type="project" value="InterPro"/>
</dbReference>
<dbReference type="GO" id="GO:0042777">
    <property type="term" value="P:proton motive force-driven plasma membrane ATP synthesis"/>
    <property type="evidence" value="ECO:0007669"/>
    <property type="project" value="UniProtKB-UniRule"/>
</dbReference>
<dbReference type="Gene3D" id="3.30.2320.30">
    <property type="entry name" value="ATP synthase, E subunit, C-terminal"/>
    <property type="match status" value="1"/>
</dbReference>
<dbReference type="HAMAP" id="MF_00311">
    <property type="entry name" value="ATP_synth_E_arch"/>
    <property type="match status" value="1"/>
</dbReference>
<dbReference type="InterPro" id="IPR038495">
    <property type="entry name" value="ATPase_E_C"/>
</dbReference>
<dbReference type="InterPro" id="IPR002842">
    <property type="entry name" value="ATPase_V1_Esu"/>
</dbReference>
<dbReference type="Pfam" id="PF01991">
    <property type="entry name" value="vATP-synt_E"/>
    <property type="match status" value="1"/>
</dbReference>
<dbReference type="SUPFAM" id="SSF160527">
    <property type="entry name" value="V-type ATPase subunit E-like"/>
    <property type="match status" value="1"/>
</dbReference>
<sequence length="200" mass="22909">MSVETIINRIREEAEAEIRTIRAEEACDVGAIRAQAEQKAENAYNHRIAEGQREIRQLIASQESRTRIEAKRKVREVREEMLRQCFDEVSSYLKTIRTRPEYPSFLEAMITESAKNLGPSDIAVKVHPDDRRLAADSISRINQEGFSLILSEEPIITSGGVICERISDRVVIDNTVEVRFVRLEREMIVAASRILFHGER</sequence>
<gene>
    <name evidence="1" type="primary">atpE3</name>
    <name type="ordered locus">Mhun_1773</name>
</gene>
<organism>
    <name type="scientific">Methanospirillum hungatei JF-1 (strain ATCC 27890 / DSM 864 / NBRC 100397 / JF-1)</name>
    <dbReference type="NCBI Taxonomy" id="323259"/>
    <lineage>
        <taxon>Archaea</taxon>
        <taxon>Methanobacteriati</taxon>
        <taxon>Methanobacteriota</taxon>
        <taxon>Stenosarchaea group</taxon>
        <taxon>Methanomicrobia</taxon>
        <taxon>Methanomicrobiales</taxon>
        <taxon>Methanospirillaceae</taxon>
        <taxon>Methanospirillum</taxon>
    </lineage>
</organism>
<name>AATE3_METHJ</name>
<comment type="function">
    <text evidence="1">Component of the A-type ATP synthase that produces ATP from ADP in the presence of a proton gradient across the membrane.</text>
</comment>
<comment type="subunit">
    <text evidence="1">Has multiple subunits with at least A(3), B(3), C, D, E, F, H, I and proteolipid K(x).</text>
</comment>
<comment type="subcellular location">
    <subcellularLocation>
        <location evidence="1">Cell membrane</location>
        <topology evidence="1">Peripheral membrane protein</topology>
    </subcellularLocation>
</comment>
<comment type="similarity">
    <text evidence="1">Belongs to the V-ATPase E subunit family.</text>
</comment>
<keyword id="KW-0066">ATP synthesis</keyword>
<keyword id="KW-1003">Cell membrane</keyword>
<keyword id="KW-0375">Hydrogen ion transport</keyword>
<keyword id="KW-0406">Ion transport</keyword>
<keyword id="KW-0472">Membrane</keyword>
<keyword id="KW-1185">Reference proteome</keyword>
<keyword id="KW-0813">Transport</keyword>
<feature type="chain" id="PRO_0000322534" description="A-type ATP synthase subunit E 3">
    <location>
        <begin position="1"/>
        <end position="200"/>
    </location>
</feature>